<evidence type="ECO:0000255" key="1">
    <source>
        <dbReference type="HAMAP-Rule" id="MF_00821"/>
    </source>
</evidence>
<evidence type="ECO:0000256" key="2">
    <source>
        <dbReference type="SAM" id="MobiDB-lite"/>
    </source>
</evidence>
<reference key="1">
    <citation type="submission" date="2006-08" db="EMBL/GenBank/DDBJ databases">
        <title>Complete sequence of Alkalilimnicola ehrilichei MLHE-1.</title>
        <authorList>
            <person name="Copeland A."/>
            <person name="Lucas S."/>
            <person name="Lapidus A."/>
            <person name="Barry K."/>
            <person name="Detter J.C."/>
            <person name="Glavina del Rio T."/>
            <person name="Hammon N."/>
            <person name="Israni S."/>
            <person name="Dalin E."/>
            <person name="Tice H."/>
            <person name="Pitluck S."/>
            <person name="Sims D."/>
            <person name="Brettin T."/>
            <person name="Bruce D."/>
            <person name="Han C."/>
            <person name="Tapia R."/>
            <person name="Gilna P."/>
            <person name="Schmutz J."/>
            <person name="Larimer F."/>
            <person name="Land M."/>
            <person name="Hauser L."/>
            <person name="Kyrpides N."/>
            <person name="Mikhailova N."/>
            <person name="Oremland R.S."/>
            <person name="Hoeft S.E."/>
            <person name="Switzer-Blum J."/>
            <person name="Kulp T."/>
            <person name="King G."/>
            <person name="Tabita R."/>
            <person name="Witte B."/>
            <person name="Santini J.M."/>
            <person name="Basu P."/>
            <person name="Hollibaugh J.T."/>
            <person name="Xie G."/>
            <person name="Stolz J.F."/>
            <person name="Richardson P."/>
        </authorList>
    </citation>
    <scope>NUCLEOTIDE SEQUENCE [LARGE SCALE GENOMIC DNA]</scope>
    <source>
        <strain>ATCC BAA-1101 / DSM 17681 / MLHE-1</strain>
    </source>
</reference>
<proteinExistence type="inferred from homology"/>
<protein>
    <recommendedName>
        <fullName evidence="1">Protein-export protein SecB</fullName>
    </recommendedName>
</protein>
<comment type="function">
    <text evidence="1">One of the proteins required for the normal export of preproteins out of the cell cytoplasm. It is a molecular chaperone that binds to a subset of precursor proteins, maintaining them in a translocation-competent state. It also specifically binds to its receptor SecA.</text>
</comment>
<comment type="subunit">
    <text evidence="1">Homotetramer, a dimer of dimers. One homotetramer interacts with 1 SecA dimer.</text>
</comment>
<comment type="subcellular location">
    <subcellularLocation>
        <location evidence="1">Cytoplasm</location>
    </subcellularLocation>
</comment>
<comment type="similarity">
    <text evidence="1">Belongs to the SecB family.</text>
</comment>
<gene>
    <name evidence="1" type="primary">secB</name>
    <name type="ordered locus">Mlg_2571</name>
</gene>
<organism>
    <name type="scientific">Alkalilimnicola ehrlichii (strain ATCC BAA-1101 / DSM 17681 / MLHE-1)</name>
    <dbReference type="NCBI Taxonomy" id="187272"/>
    <lineage>
        <taxon>Bacteria</taxon>
        <taxon>Pseudomonadati</taxon>
        <taxon>Pseudomonadota</taxon>
        <taxon>Gammaproteobacteria</taxon>
        <taxon>Chromatiales</taxon>
        <taxon>Ectothiorhodospiraceae</taxon>
        <taxon>Alkalilimnicola</taxon>
    </lineage>
</organism>
<feature type="chain" id="PRO_0000318217" description="Protein-export protein SecB">
    <location>
        <begin position="1"/>
        <end position="188"/>
    </location>
</feature>
<feature type="region of interest" description="Disordered" evidence="2">
    <location>
        <begin position="1"/>
        <end position="21"/>
    </location>
</feature>
<feature type="region of interest" description="Disordered" evidence="2">
    <location>
        <begin position="160"/>
        <end position="188"/>
    </location>
</feature>
<feature type="compositionally biased region" description="Polar residues" evidence="2">
    <location>
        <begin position="176"/>
        <end position="188"/>
    </location>
</feature>
<name>SECB_ALKEH</name>
<accession>Q0A5H6</accession>
<keyword id="KW-0143">Chaperone</keyword>
<keyword id="KW-0963">Cytoplasm</keyword>
<keyword id="KW-0653">Protein transport</keyword>
<keyword id="KW-1185">Reference proteome</keyword>
<keyword id="KW-0811">Translocation</keyword>
<keyword id="KW-0813">Transport</keyword>
<dbReference type="EMBL" id="CP000453">
    <property type="protein sequence ID" value="ABI57911.1"/>
    <property type="molecule type" value="Genomic_DNA"/>
</dbReference>
<dbReference type="RefSeq" id="WP_011630304.1">
    <property type="nucleotide sequence ID" value="NC_008340.1"/>
</dbReference>
<dbReference type="SMR" id="Q0A5H6"/>
<dbReference type="KEGG" id="aeh:Mlg_2571"/>
<dbReference type="eggNOG" id="COG1952">
    <property type="taxonomic scope" value="Bacteria"/>
</dbReference>
<dbReference type="HOGENOM" id="CLU_111574_1_0_6"/>
<dbReference type="OrthoDB" id="9795145at2"/>
<dbReference type="Proteomes" id="UP000001962">
    <property type="component" value="Chromosome"/>
</dbReference>
<dbReference type="GO" id="GO:0005737">
    <property type="term" value="C:cytoplasm"/>
    <property type="evidence" value="ECO:0007669"/>
    <property type="project" value="UniProtKB-SubCell"/>
</dbReference>
<dbReference type="GO" id="GO:0051082">
    <property type="term" value="F:unfolded protein binding"/>
    <property type="evidence" value="ECO:0007669"/>
    <property type="project" value="InterPro"/>
</dbReference>
<dbReference type="GO" id="GO:0006457">
    <property type="term" value="P:protein folding"/>
    <property type="evidence" value="ECO:0007669"/>
    <property type="project" value="UniProtKB-UniRule"/>
</dbReference>
<dbReference type="GO" id="GO:0051262">
    <property type="term" value="P:protein tetramerization"/>
    <property type="evidence" value="ECO:0007669"/>
    <property type="project" value="InterPro"/>
</dbReference>
<dbReference type="GO" id="GO:0015031">
    <property type="term" value="P:protein transport"/>
    <property type="evidence" value="ECO:0007669"/>
    <property type="project" value="UniProtKB-UniRule"/>
</dbReference>
<dbReference type="Gene3D" id="3.10.420.10">
    <property type="entry name" value="SecB-like"/>
    <property type="match status" value="1"/>
</dbReference>
<dbReference type="HAMAP" id="MF_00821">
    <property type="entry name" value="SecB"/>
    <property type="match status" value="1"/>
</dbReference>
<dbReference type="InterPro" id="IPR003708">
    <property type="entry name" value="SecB"/>
</dbReference>
<dbReference type="InterPro" id="IPR035958">
    <property type="entry name" value="SecB-like_sf"/>
</dbReference>
<dbReference type="NCBIfam" id="NF004393">
    <property type="entry name" value="PRK05751.1-4"/>
    <property type="match status" value="1"/>
</dbReference>
<dbReference type="NCBIfam" id="TIGR00809">
    <property type="entry name" value="secB"/>
    <property type="match status" value="1"/>
</dbReference>
<dbReference type="PANTHER" id="PTHR36918">
    <property type="match status" value="1"/>
</dbReference>
<dbReference type="PANTHER" id="PTHR36918:SF1">
    <property type="entry name" value="PROTEIN-EXPORT PROTEIN SECB"/>
    <property type="match status" value="1"/>
</dbReference>
<dbReference type="Pfam" id="PF02556">
    <property type="entry name" value="SecB"/>
    <property type="match status" value="1"/>
</dbReference>
<dbReference type="PRINTS" id="PR01594">
    <property type="entry name" value="SECBCHAPRONE"/>
</dbReference>
<dbReference type="SUPFAM" id="SSF54611">
    <property type="entry name" value="SecB-like"/>
    <property type="match status" value="1"/>
</dbReference>
<sequence>MADEQPQGNGQGAAQQGEQPKQQFQIAKLYLKDVSLETPNSPEVFTGEWKPQVNVDLTSKTRALQEGHYEVALTVTVTAKQGEKTAYLCEVTQAGVFQIKGFEDAARNGLLGAYCPAQLFPYVRETVNSLITQGGFPAMVLQPVNFDALYQQRLAQAAERQKAEQAQGGGAEAKGSDSTAAQGSDTQQ</sequence>